<protein>
    <recommendedName>
        <fullName evidence="1">Chromosomal replication initiator protein DnaA</fullName>
    </recommendedName>
</protein>
<keyword id="KW-0067">ATP-binding</keyword>
<keyword id="KW-0963">Cytoplasm</keyword>
<keyword id="KW-0235">DNA replication</keyword>
<keyword id="KW-0238">DNA-binding</keyword>
<keyword id="KW-0446">Lipid-binding</keyword>
<keyword id="KW-0547">Nucleotide-binding</keyword>
<gene>
    <name evidence="1" type="primary">dnaA</name>
    <name type="ordered locus">PSEEN0001</name>
</gene>
<organism>
    <name type="scientific">Pseudomonas entomophila (strain L48)</name>
    <dbReference type="NCBI Taxonomy" id="384676"/>
    <lineage>
        <taxon>Bacteria</taxon>
        <taxon>Pseudomonadati</taxon>
        <taxon>Pseudomonadota</taxon>
        <taxon>Gammaproteobacteria</taxon>
        <taxon>Pseudomonadales</taxon>
        <taxon>Pseudomonadaceae</taxon>
        <taxon>Pseudomonas</taxon>
    </lineage>
</organism>
<proteinExistence type="inferred from homology"/>
<dbReference type="EMBL" id="CT573326">
    <property type="protein sequence ID" value="CAK12998.1"/>
    <property type="molecule type" value="Genomic_DNA"/>
</dbReference>
<dbReference type="RefSeq" id="WP_011531459.1">
    <property type="nucleotide sequence ID" value="NC_008027.1"/>
</dbReference>
<dbReference type="SMR" id="Q1I2G4"/>
<dbReference type="STRING" id="384676.PSEEN0001"/>
<dbReference type="GeneID" id="32803372"/>
<dbReference type="KEGG" id="pen:PSEEN0001"/>
<dbReference type="eggNOG" id="COG0593">
    <property type="taxonomic scope" value="Bacteria"/>
</dbReference>
<dbReference type="HOGENOM" id="CLU_026910_0_1_6"/>
<dbReference type="OrthoDB" id="9807019at2"/>
<dbReference type="Proteomes" id="UP000000658">
    <property type="component" value="Chromosome"/>
</dbReference>
<dbReference type="GO" id="GO:0005737">
    <property type="term" value="C:cytoplasm"/>
    <property type="evidence" value="ECO:0007669"/>
    <property type="project" value="UniProtKB-SubCell"/>
</dbReference>
<dbReference type="GO" id="GO:0005886">
    <property type="term" value="C:plasma membrane"/>
    <property type="evidence" value="ECO:0007669"/>
    <property type="project" value="TreeGrafter"/>
</dbReference>
<dbReference type="GO" id="GO:0005524">
    <property type="term" value="F:ATP binding"/>
    <property type="evidence" value="ECO:0007669"/>
    <property type="project" value="UniProtKB-UniRule"/>
</dbReference>
<dbReference type="GO" id="GO:0016887">
    <property type="term" value="F:ATP hydrolysis activity"/>
    <property type="evidence" value="ECO:0007669"/>
    <property type="project" value="InterPro"/>
</dbReference>
<dbReference type="GO" id="GO:0003688">
    <property type="term" value="F:DNA replication origin binding"/>
    <property type="evidence" value="ECO:0007669"/>
    <property type="project" value="UniProtKB-UniRule"/>
</dbReference>
<dbReference type="GO" id="GO:0008289">
    <property type="term" value="F:lipid binding"/>
    <property type="evidence" value="ECO:0007669"/>
    <property type="project" value="UniProtKB-KW"/>
</dbReference>
<dbReference type="GO" id="GO:0006270">
    <property type="term" value="P:DNA replication initiation"/>
    <property type="evidence" value="ECO:0007669"/>
    <property type="project" value="UniProtKB-UniRule"/>
</dbReference>
<dbReference type="GO" id="GO:0006275">
    <property type="term" value="P:regulation of DNA replication"/>
    <property type="evidence" value="ECO:0007669"/>
    <property type="project" value="UniProtKB-UniRule"/>
</dbReference>
<dbReference type="CDD" id="cd00009">
    <property type="entry name" value="AAA"/>
    <property type="match status" value="1"/>
</dbReference>
<dbReference type="CDD" id="cd06571">
    <property type="entry name" value="Bac_DnaA_C"/>
    <property type="match status" value="1"/>
</dbReference>
<dbReference type="FunFam" id="1.10.1750.10:FF:000001">
    <property type="entry name" value="Chromosomal replication initiator protein DnaA"/>
    <property type="match status" value="1"/>
</dbReference>
<dbReference type="FunFam" id="1.10.8.60:FF:000003">
    <property type="entry name" value="Chromosomal replication initiator protein DnaA"/>
    <property type="match status" value="1"/>
</dbReference>
<dbReference type="FunFam" id="3.40.50.300:FF:000103">
    <property type="entry name" value="Chromosomal replication initiator protein DnaA"/>
    <property type="match status" value="1"/>
</dbReference>
<dbReference type="Gene3D" id="1.10.1750.10">
    <property type="match status" value="1"/>
</dbReference>
<dbReference type="Gene3D" id="1.10.8.60">
    <property type="match status" value="1"/>
</dbReference>
<dbReference type="Gene3D" id="3.30.300.180">
    <property type="match status" value="1"/>
</dbReference>
<dbReference type="Gene3D" id="3.40.50.300">
    <property type="entry name" value="P-loop containing nucleotide triphosphate hydrolases"/>
    <property type="match status" value="1"/>
</dbReference>
<dbReference type="HAMAP" id="MF_00377">
    <property type="entry name" value="DnaA_bact"/>
    <property type="match status" value="1"/>
</dbReference>
<dbReference type="InterPro" id="IPR003593">
    <property type="entry name" value="AAA+_ATPase"/>
</dbReference>
<dbReference type="InterPro" id="IPR001957">
    <property type="entry name" value="Chromosome_initiator_DnaA"/>
</dbReference>
<dbReference type="InterPro" id="IPR020591">
    <property type="entry name" value="Chromosome_initiator_DnaA-like"/>
</dbReference>
<dbReference type="InterPro" id="IPR018312">
    <property type="entry name" value="Chromosome_initiator_DnaA_CS"/>
</dbReference>
<dbReference type="InterPro" id="IPR013159">
    <property type="entry name" value="DnaA_C"/>
</dbReference>
<dbReference type="InterPro" id="IPR013317">
    <property type="entry name" value="DnaA_dom"/>
</dbReference>
<dbReference type="InterPro" id="IPR024633">
    <property type="entry name" value="DnaA_N_dom"/>
</dbReference>
<dbReference type="InterPro" id="IPR038454">
    <property type="entry name" value="DnaA_N_sf"/>
</dbReference>
<dbReference type="InterPro" id="IPR027417">
    <property type="entry name" value="P-loop_NTPase"/>
</dbReference>
<dbReference type="InterPro" id="IPR010921">
    <property type="entry name" value="Trp_repressor/repl_initiator"/>
</dbReference>
<dbReference type="NCBIfam" id="TIGR00362">
    <property type="entry name" value="DnaA"/>
    <property type="match status" value="1"/>
</dbReference>
<dbReference type="PANTHER" id="PTHR30050">
    <property type="entry name" value="CHROMOSOMAL REPLICATION INITIATOR PROTEIN DNAA"/>
    <property type="match status" value="1"/>
</dbReference>
<dbReference type="PANTHER" id="PTHR30050:SF2">
    <property type="entry name" value="CHROMOSOMAL REPLICATION INITIATOR PROTEIN DNAA"/>
    <property type="match status" value="1"/>
</dbReference>
<dbReference type="Pfam" id="PF00308">
    <property type="entry name" value="Bac_DnaA"/>
    <property type="match status" value="1"/>
</dbReference>
<dbReference type="Pfam" id="PF08299">
    <property type="entry name" value="Bac_DnaA_C"/>
    <property type="match status" value="1"/>
</dbReference>
<dbReference type="Pfam" id="PF11638">
    <property type="entry name" value="DnaA_N"/>
    <property type="match status" value="1"/>
</dbReference>
<dbReference type="PRINTS" id="PR00051">
    <property type="entry name" value="DNAA"/>
</dbReference>
<dbReference type="SMART" id="SM00382">
    <property type="entry name" value="AAA"/>
    <property type="match status" value="1"/>
</dbReference>
<dbReference type="SMART" id="SM00760">
    <property type="entry name" value="Bac_DnaA_C"/>
    <property type="match status" value="1"/>
</dbReference>
<dbReference type="SUPFAM" id="SSF52540">
    <property type="entry name" value="P-loop containing nucleoside triphosphate hydrolases"/>
    <property type="match status" value="1"/>
</dbReference>
<dbReference type="SUPFAM" id="SSF48295">
    <property type="entry name" value="TrpR-like"/>
    <property type="match status" value="1"/>
</dbReference>
<dbReference type="PROSITE" id="PS01008">
    <property type="entry name" value="DNAA"/>
    <property type="match status" value="1"/>
</dbReference>
<comment type="function">
    <text evidence="1">Plays an essential role in the initiation and regulation of chromosomal replication. ATP-DnaA binds to the origin of replication (oriC) to initiate formation of the DNA replication initiation complex once per cell cycle. Binds the DnaA box (a 9 base pair repeat at the origin) and separates the double-stranded (ds)DNA. Forms a right-handed helical filament on oriC DNA; dsDNA binds to the exterior of the filament while single-stranded (ss)DNA is stabiized in the filament's interior. The ATP-DnaA-oriC complex binds and stabilizes one strand of the AT-rich DNA unwinding element (DUE), permitting loading of DNA polymerase. After initiation quickly degrades to an ADP-DnaA complex that is not apt for DNA replication. Binds acidic phospholipids.</text>
</comment>
<comment type="subunit">
    <text evidence="1">Oligomerizes as a right-handed, spiral filament on DNA at oriC.</text>
</comment>
<comment type="subcellular location">
    <subcellularLocation>
        <location evidence="1">Cytoplasm</location>
    </subcellularLocation>
</comment>
<comment type="domain">
    <text evidence="1">Domain I is involved in oligomerization and binding regulators, domain II is flexibile and of varying length in different bacteria, domain III forms the AAA+ region, while domain IV binds dsDNA.</text>
</comment>
<comment type="similarity">
    <text evidence="1">Belongs to the DnaA family.</text>
</comment>
<name>DNAA_PSEE4</name>
<evidence type="ECO:0000255" key="1">
    <source>
        <dbReference type="HAMAP-Rule" id="MF_00377"/>
    </source>
</evidence>
<evidence type="ECO:0000256" key="2">
    <source>
        <dbReference type="SAM" id="MobiDB-lite"/>
    </source>
</evidence>
<accession>Q1I2G4</accession>
<reference key="1">
    <citation type="journal article" date="2006" name="Nat. Biotechnol.">
        <title>Complete genome sequence of the entomopathogenic and metabolically versatile soil bacterium Pseudomonas entomophila.</title>
        <authorList>
            <person name="Vodovar N."/>
            <person name="Vallenet D."/>
            <person name="Cruveiller S."/>
            <person name="Rouy Z."/>
            <person name="Barbe V."/>
            <person name="Acosta C."/>
            <person name="Cattolico L."/>
            <person name="Jubin C."/>
            <person name="Lajus A."/>
            <person name="Segurens B."/>
            <person name="Vacherie B."/>
            <person name="Wincker P."/>
            <person name="Weissenbach J."/>
            <person name="Lemaitre B."/>
            <person name="Medigue C."/>
            <person name="Boccard F."/>
        </authorList>
    </citation>
    <scope>NUCLEOTIDE SEQUENCE [LARGE SCALE GENOMIC DNA]</scope>
    <source>
        <strain>L48</strain>
    </source>
</reference>
<feature type="chain" id="PRO_1000048693" description="Chromosomal replication initiator protein DnaA">
    <location>
        <begin position="1"/>
        <end position="508"/>
    </location>
</feature>
<feature type="region of interest" description="Domain I, interacts with DnaA modulators" evidence="1">
    <location>
        <begin position="1"/>
        <end position="90"/>
    </location>
</feature>
<feature type="region of interest" description="Domain II" evidence="1">
    <location>
        <begin position="91"/>
        <end position="171"/>
    </location>
</feature>
<feature type="region of interest" description="Disordered" evidence="2">
    <location>
        <begin position="130"/>
        <end position="160"/>
    </location>
</feature>
<feature type="region of interest" description="Domain III, AAA+ region" evidence="1">
    <location>
        <begin position="172"/>
        <end position="388"/>
    </location>
</feature>
<feature type="region of interest" description="Domain IV, binds dsDNA" evidence="1">
    <location>
        <begin position="389"/>
        <end position="508"/>
    </location>
</feature>
<feature type="binding site" evidence="1">
    <location>
        <position position="216"/>
    </location>
    <ligand>
        <name>ATP</name>
        <dbReference type="ChEBI" id="CHEBI:30616"/>
    </ligand>
</feature>
<feature type="binding site" evidence="1">
    <location>
        <position position="218"/>
    </location>
    <ligand>
        <name>ATP</name>
        <dbReference type="ChEBI" id="CHEBI:30616"/>
    </ligand>
</feature>
<feature type="binding site" evidence="1">
    <location>
        <position position="219"/>
    </location>
    <ligand>
        <name>ATP</name>
        <dbReference type="ChEBI" id="CHEBI:30616"/>
    </ligand>
</feature>
<feature type="binding site" evidence="1">
    <location>
        <position position="220"/>
    </location>
    <ligand>
        <name>ATP</name>
        <dbReference type="ChEBI" id="CHEBI:30616"/>
    </ligand>
</feature>
<sequence>MSVELWQQCVELLRDELPAQQFNTWIRPLQVEAEGDELRVYAPNRFVLDWVNEKYLGRLLELLGEHGNGLAPALSLLIGSRRSSAPRAAPNAPVSAAVAATMAQQTQQAAQVVVPSEPIVVPVAEPVLSEVEEPSSRDSFDSMSDSGSVPAASGRTEQRTVQVEGALKHTSYLNRTFTFETFVEGKSNQLARAAAWQVADNPKHGYNPLFLYGGVGLGKTHLMHAVGNHLLKKNPNAKVVYLHSERFVADMVKALQLNAINEFKRFYRSVDALLIDDIQFFARKERSQEEFFHTFNALLEGGQQVILTSDRYPKEIEGLEERLKSRFGWGLTVAVEPPELETRVAILMKKADQAKVELPHDAAFFIAQRIRSNVRELEGALKRVIAHSHFMGRDITIELIRESLKDLLALQDKLVSVDNIQRTVAEYYKIKISDLLSKRRSRSVARPRQVAMALSKELTNHSLPEIGDMFGGRDHTTVLHACRKINELKESDADIREDYKNLLRTLTT</sequence>